<protein>
    <recommendedName>
        <fullName>Phospho-2-dehydro-3-deoxyheptonate aldolase, Tyr-sensitive</fullName>
        <ecNumber>2.5.1.54</ecNumber>
    </recommendedName>
    <alternativeName>
        <fullName>3-deoxy-D-arabino-heptulosonate 7-phosphate synthase</fullName>
    </alternativeName>
    <alternativeName>
        <fullName>DAHP synthase</fullName>
    </alternativeName>
    <alternativeName>
        <fullName>Phospho-2-keto-3-deoxyheptonate aldolase</fullName>
    </alternativeName>
</protein>
<comment type="function">
    <text>Stereospecific condensation of phosphoenolpyruvate (PEP) and D-erythrose-4-phosphate (E4P) giving rise to 3-deoxy-D-arabino-heptulosonate-7-phosphate (DAHP).</text>
</comment>
<comment type="catalytic activity">
    <reaction>
        <text>D-erythrose 4-phosphate + phosphoenolpyruvate + H2O = 7-phospho-2-dehydro-3-deoxy-D-arabino-heptonate + phosphate</text>
        <dbReference type="Rhea" id="RHEA:14717"/>
        <dbReference type="ChEBI" id="CHEBI:15377"/>
        <dbReference type="ChEBI" id="CHEBI:16897"/>
        <dbReference type="ChEBI" id="CHEBI:43474"/>
        <dbReference type="ChEBI" id="CHEBI:58394"/>
        <dbReference type="ChEBI" id="CHEBI:58702"/>
        <dbReference type="EC" id="2.5.1.54"/>
    </reaction>
</comment>
<comment type="pathway">
    <text>Metabolic intermediate biosynthesis; chorismate biosynthesis; chorismate from D-erythrose 4-phosphate and phosphoenolpyruvate: step 1/7.</text>
</comment>
<comment type="miscellaneous">
    <text>There are 3 DAHP synthases, AroF is feedback-inhibited by Tyr. The other 2 DAHP synthases are Phe- and Trp-sensitive, respectively.</text>
</comment>
<comment type="similarity">
    <text evidence="1">Belongs to the class-I DAHP synthase family.</text>
</comment>
<proteinExistence type="inferred from homology"/>
<keyword id="KW-0028">Amino-acid biosynthesis</keyword>
<keyword id="KW-0057">Aromatic amino acid biosynthesis</keyword>
<keyword id="KW-1185">Reference proteome</keyword>
<keyword id="KW-0808">Transferase</keyword>
<accession>P0A1B5</accession>
<accession>P21307</accession>
<name>AROF_SALTY</name>
<organism>
    <name type="scientific">Salmonella typhimurium (strain LT2 / SGSC1412 / ATCC 700720)</name>
    <dbReference type="NCBI Taxonomy" id="99287"/>
    <lineage>
        <taxon>Bacteria</taxon>
        <taxon>Pseudomonadati</taxon>
        <taxon>Pseudomonadota</taxon>
        <taxon>Gammaproteobacteria</taxon>
        <taxon>Enterobacterales</taxon>
        <taxon>Enterobacteriaceae</taxon>
        <taxon>Salmonella</taxon>
    </lineage>
</organism>
<dbReference type="EC" id="2.5.1.54"/>
<dbReference type="EMBL" id="M31302">
    <property type="protein sequence ID" value="AAA27030.1"/>
    <property type="molecule type" value="Genomic_DNA"/>
</dbReference>
<dbReference type="EMBL" id="AE006468">
    <property type="protein sequence ID" value="AAL21559.1"/>
    <property type="molecule type" value="Genomic_DNA"/>
</dbReference>
<dbReference type="PIR" id="A35253">
    <property type="entry name" value="A35253"/>
</dbReference>
<dbReference type="RefSeq" id="NP_461600.1">
    <property type="nucleotide sequence ID" value="NC_003197.2"/>
</dbReference>
<dbReference type="RefSeq" id="WP_001168062.1">
    <property type="nucleotide sequence ID" value="NC_003197.2"/>
</dbReference>
<dbReference type="SMR" id="P0A1B5"/>
<dbReference type="STRING" id="99287.STM2670"/>
<dbReference type="PaxDb" id="99287-STM2670"/>
<dbReference type="GeneID" id="1254193"/>
<dbReference type="KEGG" id="stm:STM2670"/>
<dbReference type="PATRIC" id="fig|99287.12.peg.2814"/>
<dbReference type="HOGENOM" id="CLU_030903_0_1_6"/>
<dbReference type="OMA" id="QPLVMEN"/>
<dbReference type="PhylomeDB" id="P0A1B5"/>
<dbReference type="BioCyc" id="SENT99287:STM2670-MONOMER"/>
<dbReference type="UniPathway" id="UPA00053">
    <property type="reaction ID" value="UER00084"/>
</dbReference>
<dbReference type="Proteomes" id="UP000001014">
    <property type="component" value="Chromosome"/>
</dbReference>
<dbReference type="GO" id="GO:0005737">
    <property type="term" value="C:cytoplasm"/>
    <property type="evidence" value="ECO:0000318"/>
    <property type="project" value="GO_Central"/>
</dbReference>
<dbReference type="GO" id="GO:0003849">
    <property type="term" value="F:3-deoxy-7-phosphoheptulonate synthase activity"/>
    <property type="evidence" value="ECO:0000318"/>
    <property type="project" value="GO_Central"/>
</dbReference>
<dbReference type="GO" id="GO:0008652">
    <property type="term" value="P:amino acid biosynthetic process"/>
    <property type="evidence" value="ECO:0007669"/>
    <property type="project" value="UniProtKB-KW"/>
</dbReference>
<dbReference type="GO" id="GO:0009073">
    <property type="term" value="P:aromatic amino acid family biosynthetic process"/>
    <property type="evidence" value="ECO:0000318"/>
    <property type="project" value="GO_Central"/>
</dbReference>
<dbReference type="GO" id="GO:0009423">
    <property type="term" value="P:chorismate biosynthetic process"/>
    <property type="evidence" value="ECO:0007669"/>
    <property type="project" value="UniProtKB-UniPathway"/>
</dbReference>
<dbReference type="FunFam" id="3.20.20.70:FF:000005">
    <property type="entry name" value="Phospho-2-dehydro-3-deoxyheptonate aldolase"/>
    <property type="match status" value="1"/>
</dbReference>
<dbReference type="Gene3D" id="3.20.20.70">
    <property type="entry name" value="Aldolase class I"/>
    <property type="match status" value="1"/>
</dbReference>
<dbReference type="InterPro" id="IPR013785">
    <property type="entry name" value="Aldolase_TIM"/>
</dbReference>
<dbReference type="InterPro" id="IPR006218">
    <property type="entry name" value="DAHP1/KDSA"/>
</dbReference>
<dbReference type="InterPro" id="IPR006219">
    <property type="entry name" value="DAHP_synth_1"/>
</dbReference>
<dbReference type="NCBIfam" id="TIGR00034">
    <property type="entry name" value="aroFGH"/>
    <property type="match status" value="1"/>
</dbReference>
<dbReference type="NCBIfam" id="NF009395">
    <property type="entry name" value="PRK12755.1"/>
    <property type="match status" value="1"/>
</dbReference>
<dbReference type="PANTHER" id="PTHR21225">
    <property type="entry name" value="PHOSPHO-2-DEHYDRO-3-DEOXYHEPTONATE ALDOLASE DAHP SYNTHETASE"/>
    <property type="match status" value="1"/>
</dbReference>
<dbReference type="PANTHER" id="PTHR21225:SF10">
    <property type="entry name" value="PHOSPHO-2-DEHYDRO-3-DEOXYHEPTONATE ALDOLASE, TYR-SENSITIVE"/>
    <property type="match status" value="1"/>
</dbReference>
<dbReference type="Pfam" id="PF00793">
    <property type="entry name" value="DAHP_synth_1"/>
    <property type="match status" value="1"/>
</dbReference>
<dbReference type="PIRSF" id="PIRSF001361">
    <property type="entry name" value="DAHP_synthase"/>
    <property type="match status" value="1"/>
</dbReference>
<dbReference type="SUPFAM" id="SSF51569">
    <property type="entry name" value="Aldolase"/>
    <property type="match status" value="1"/>
</dbReference>
<sequence length="356" mass="38713">MQKDALNNVRITDEQVLMTPEQLKAAFPLSLAQEAQIAQSRGIISDIIAGRDPRLLVVCGPCSIHDPETALEYARRFKALAAEVSDSLYLVMRVYFEKPRTTVGWKGLINDPHMDGSFDVEAGLKIARQLLVELVNMGLPLATEALDPNSPQYLGDLFSWSAIGARTTESQTHREMASGLSMPVGFKNGTDGSLATAINAMRAAAQPHRFVGINQAGQVALLQTQGNPHGHVILRGGKAPNYSPADVAQCEKEMEQAGLRPSLMVDCSHGNSNKDYRRQPAVAESVVAQIKDGNRSIIGLMIESNIHEGNQSSEQPRSEMKYGVSVTDACISWEMTDALLREIHKDLSGQLAVRVA</sequence>
<evidence type="ECO:0000305" key="1"/>
<reference key="1">
    <citation type="journal article" date="1990" name="J. Bacteriol.">
        <title>Regulation of the Salmonella typhimurium aroF gene in Escherichia coli.</title>
        <authorList>
            <person name="Muday G.K."/>
            <person name="Herrmann K.M."/>
        </authorList>
    </citation>
    <scope>NUCLEOTIDE SEQUENCE [GENOMIC DNA]</scope>
</reference>
<reference key="2">
    <citation type="journal article" date="2001" name="Nature">
        <title>Complete genome sequence of Salmonella enterica serovar Typhimurium LT2.</title>
        <authorList>
            <person name="McClelland M."/>
            <person name="Sanderson K.E."/>
            <person name="Spieth J."/>
            <person name="Clifton S.W."/>
            <person name="Latreille P."/>
            <person name="Courtney L."/>
            <person name="Porwollik S."/>
            <person name="Ali J."/>
            <person name="Dante M."/>
            <person name="Du F."/>
            <person name="Hou S."/>
            <person name="Layman D."/>
            <person name="Leonard S."/>
            <person name="Nguyen C."/>
            <person name="Scott K."/>
            <person name="Holmes A."/>
            <person name="Grewal N."/>
            <person name="Mulvaney E."/>
            <person name="Ryan E."/>
            <person name="Sun H."/>
            <person name="Florea L."/>
            <person name="Miller W."/>
            <person name="Stoneking T."/>
            <person name="Nhan M."/>
            <person name="Waterston R."/>
            <person name="Wilson R.K."/>
        </authorList>
    </citation>
    <scope>NUCLEOTIDE SEQUENCE [LARGE SCALE GENOMIC DNA]</scope>
    <source>
        <strain>LT2 / SGSC1412 / ATCC 700720</strain>
    </source>
</reference>
<feature type="chain" id="PRO_0000140834" description="Phospho-2-dehydro-3-deoxyheptonate aldolase, Tyr-sensitive">
    <location>
        <begin position="1"/>
        <end position="356"/>
    </location>
</feature>
<feature type="sequence conflict" description="In Ref. 1; AAA27030." evidence="1" ref="1">
    <original>G</original>
    <variation>A</variation>
    <location>
        <position position="185"/>
    </location>
</feature>
<gene>
    <name type="primary">aroF</name>
    <name type="ordered locus">STM2670</name>
</gene>